<evidence type="ECO:0000250" key="1"/>
<evidence type="ECO:0000305" key="2"/>
<sequence length="485" mass="54965">MHYYLGIDCGGTFIKAAIFDQNGTLQSIARRNIPIISEKPGYAERDMDELWNLCAQVIQKTIRQSSILPQQIKAIGISAQGKGAFFLDKDNKPLGRAILSSDQRAYEIVQCWQKENILQKFYPITLQTLWMGHPVSILRWIKENEPSRYEQIHTILMSHDYLRFCLTEKLYCEETNISESNFYNMREGKYDIQLAKLFGITECIDKLPPIIKSNKIAGYVTSRAAEQSGLVEGIPVVGGLFDVVSTALCADLKDDQHLNVVLGTWSVVSGVTHYIDDNQTIPFVYGKYPEKNKFIIHEASPTSAGNLEWFVNQFNLPNYDDINHEIAKLKPASSSVLFAPFLYGSNAKLGMQAGFYGIQSHHTQIHLLQAIYEGVIFSLMSHLERMQVRFPNASTVRVTGGPAKSEVWMQMLADISGMRLEIPNIEETGCLGAALMAMQAESAVEISQILNIDRKIFLPDKNQYSKYQHKYHRYLKFIEALKNLD</sequence>
<feature type="chain" id="PRO_0000059561" description="Probable L-xylulose kinase">
    <location>
        <begin position="1"/>
        <end position="485"/>
    </location>
</feature>
<keyword id="KW-0067">ATP-binding</keyword>
<keyword id="KW-0418">Kinase</keyword>
<keyword id="KW-0547">Nucleotide-binding</keyword>
<keyword id="KW-1185">Reference proteome</keyword>
<keyword id="KW-0808">Transferase</keyword>
<protein>
    <recommendedName>
        <fullName>Probable L-xylulose kinase</fullName>
        <shortName>L-xylulokinase</shortName>
        <ecNumber>2.7.1.53</ecNumber>
    </recommendedName>
</protein>
<dbReference type="EC" id="2.7.1.53"/>
<dbReference type="EMBL" id="L42023">
    <property type="protein sequence ID" value="AAC22687.1"/>
    <property type="molecule type" value="Genomic_DNA"/>
</dbReference>
<dbReference type="PIR" id="H64164">
    <property type="entry name" value="H64164"/>
</dbReference>
<dbReference type="RefSeq" id="NP_439187.1">
    <property type="nucleotide sequence ID" value="NC_000907.1"/>
</dbReference>
<dbReference type="SMR" id="P44991"/>
<dbReference type="STRING" id="71421.HI_1027"/>
<dbReference type="EnsemblBacteria" id="AAC22687">
    <property type="protein sequence ID" value="AAC22687"/>
    <property type="gene ID" value="HI_1027"/>
</dbReference>
<dbReference type="KEGG" id="hin:HI_1027"/>
<dbReference type="PATRIC" id="fig|71421.8.peg.1071"/>
<dbReference type="eggNOG" id="COG1070">
    <property type="taxonomic scope" value="Bacteria"/>
</dbReference>
<dbReference type="HOGENOM" id="CLU_009281_3_1_6"/>
<dbReference type="OrthoDB" id="9805576at2"/>
<dbReference type="PhylomeDB" id="P44991"/>
<dbReference type="BioCyc" id="HINF71421:G1GJ1-1067-MONOMER"/>
<dbReference type="Proteomes" id="UP000000579">
    <property type="component" value="Chromosome"/>
</dbReference>
<dbReference type="GO" id="GO:0005524">
    <property type="term" value="F:ATP binding"/>
    <property type="evidence" value="ECO:0007669"/>
    <property type="project" value="UniProtKB-KW"/>
</dbReference>
<dbReference type="GO" id="GO:0008744">
    <property type="term" value="F:L-xylulokinase activity"/>
    <property type="evidence" value="ECO:0007669"/>
    <property type="project" value="UniProtKB-EC"/>
</dbReference>
<dbReference type="GO" id="GO:0016773">
    <property type="term" value="F:phosphotransferase activity, alcohol group as acceptor"/>
    <property type="evidence" value="ECO:0007669"/>
    <property type="project" value="InterPro"/>
</dbReference>
<dbReference type="CDD" id="cd07802">
    <property type="entry name" value="ASKHA_NBD_FGGY_EcLyxK-like"/>
    <property type="match status" value="1"/>
</dbReference>
<dbReference type="Gene3D" id="3.30.420.40">
    <property type="match status" value="2"/>
</dbReference>
<dbReference type="InterPro" id="IPR043129">
    <property type="entry name" value="ATPase_NBD"/>
</dbReference>
<dbReference type="InterPro" id="IPR000577">
    <property type="entry name" value="Carb_kinase_FGGY"/>
</dbReference>
<dbReference type="InterPro" id="IPR018483">
    <property type="entry name" value="Carb_kinase_FGGY_CS"/>
</dbReference>
<dbReference type="InterPro" id="IPR018485">
    <property type="entry name" value="FGGY_C"/>
</dbReference>
<dbReference type="InterPro" id="IPR050406">
    <property type="entry name" value="FGGY_Carb_Kinase"/>
</dbReference>
<dbReference type="InterPro" id="IPR018484">
    <property type="entry name" value="FGGY_N"/>
</dbReference>
<dbReference type="PANTHER" id="PTHR43095:SF3">
    <property type="entry name" value="L-XYLULOSE_3-KETO-L-GULONATE KINASE"/>
    <property type="match status" value="1"/>
</dbReference>
<dbReference type="PANTHER" id="PTHR43095">
    <property type="entry name" value="SUGAR KINASE"/>
    <property type="match status" value="1"/>
</dbReference>
<dbReference type="Pfam" id="PF02782">
    <property type="entry name" value="FGGY_C"/>
    <property type="match status" value="1"/>
</dbReference>
<dbReference type="Pfam" id="PF00370">
    <property type="entry name" value="FGGY_N"/>
    <property type="match status" value="1"/>
</dbReference>
<dbReference type="PIRSF" id="PIRSF000538">
    <property type="entry name" value="GlpK"/>
    <property type="match status" value="1"/>
</dbReference>
<dbReference type="SUPFAM" id="SSF53067">
    <property type="entry name" value="Actin-like ATPase domain"/>
    <property type="match status" value="2"/>
</dbReference>
<dbReference type="PROSITE" id="PS00445">
    <property type="entry name" value="FGGY_KINASES_2"/>
    <property type="match status" value="1"/>
</dbReference>
<proteinExistence type="inferred from homology"/>
<comment type="catalytic activity">
    <reaction>
        <text>L-xylulose + ATP = L-xylulose 5-phosphate + ADP + H(+)</text>
        <dbReference type="Rhea" id="RHEA:18869"/>
        <dbReference type="ChEBI" id="CHEBI:15378"/>
        <dbReference type="ChEBI" id="CHEBI:17399"/>
        <dbReference type="ChEBI" id="CHEBI:30616"/>
        <dbReference type="ChEBI" id="CHEBI:57829"/>
        <dbReference type="ChEBI" id="CHEBI:456216"/>
        <dbReference type="EC" id="2.7.1.53"/>
    </reaction>
</comment>
<comment type="subunit">
    <text evidence="1">Homodimer.</text>
</comment>
<comment type="similarity">
    <text evidence="2">Belongs to the FGGY kinase family.</text>
</comment>
<organism>
    <name type="scientific">Haemophilus influenzae (strain ATCC 51907 / DSM 11121 / KW20 / Rd)</name>
    <dbReference type="NCBI Taxonomy" id="71421"/>
    <lineage>
        <taxon>Bacteria</taxon>
        <taxon>Pseudomonadati</taxon>
        <taxon>Pseudomonadota</taxon>
        <taxon>Gammaproteobacteria</taxon>
        <taxon>Pasteurellales</taxon>
        <taxon>Pasteurellaceae</taxon>
        <taxon>Haemophilus</taxon>
    </lineage>
</organism>
<reference key="1">
    <citation type="journal article" date="1995" name="Science">
        <title>Whole-genome random sequencing and assembly of Haemophilus influenzae Rd.</title>
        <authorList>
            <person name="Fleischmann R.D."/>
            <person name="Adams M.D."/>
            <person name="White O."/>
            <person name="Clayton R.A."/>
            <person name="Kirkness E.F."/>
            <person name="Kerlavage A.R."/>
            <person name="Bult C.J."/>
            <person name="Tomb J.-F."/>
            <person name="Dougherty B.A."/>
            <person name="Merrick J.M."/>
            <person name="McKenney K."/>
            <person name="Sutton G.G."/>
            <person name="FitzHugh W."/>
            <person name="Fields C.A."/>
            <person name="Gocayne J.D."/>
            <person name="Scott J.D."/>
            <person name="Shirley R."/>
            <person name="Liu L.-I."/>
            <person name="Glodek A."/>
            <person name="Kelley J.M."/>
            <person name="Weidman J.F."/>
            <person name="Phillips C.A."/>
            <person name="Spriggs T."/>
            <person name="Hedblom E."/>
            <person name="Cotton M.D."/>
            <person name="Utterback T.R."/>
            <person name="Hanna M.C."/>
            <person name="Nguyen D.T."/>
            <person name="Saudek D.M."/>
            <person name="Brandon R.C."/>
            <person name="Fine L.D."/>
            <person name="Fritchman J.L."/>
            <person name="Fuhrmann J.L."/>
            <person name="Geoghagen N.S.M."/>
            <person name="Gnehm C.L."/>
            <person name="McDonald L.A."/>
            <person name="Small K.V."/>
            <person name="Fraser C.M."/>
            <person name="Smith H.O."/>
            <person name="Venter J.C."/>
        </authorList>
    </citation>
    <scope>NUCLEOTIDE SEQUENCE [LARGE SCALE GENOMIC DNA]</scope>
    <source>
        <strain>ATCC 51907 / DSM 11121 / KW20 / Rd</strain>
    </source>
</reference>
<gene>
    <name type="primary">lyx</name>
    <name type="synonym">lyxK</name>
    <name type="synonym">sgbK</name>
    <name type="ordered locus">HI_1027</name>
</gene>
<accession>P44991</accession>
<name>LYXK_HAEIN</name>